<proteinExistence type="evidence at protein level"/>
<feature type="chain" id="PRO_0000051201" description="Regulatory-associated protein of mTOR">
    <location>
        <begin position="1"/>
        <end position="1335"/>
    </location>
</feature>
<feature type="repeat" description="WD 1">
    <location>
        <begin position="1020"/>
        <end position="1061"/>
    </location>
</feature>
<feature type="repeat" description="WD 2">
    <location>
        <begin position="1065"/>
        <end position="1106"/>
    </location>
</feature>
<feature type="repeat" description="WD 3">
    <location>
        <begin position="1121"/>
        <end position="1160"/>
    </location>
</feature>
<feature type="repeat" description="WD 4">
    <location>
        <begin position="1164"/>
        <end position="1203"/>
    </location>
</feature>
<feature type="repeat" description="WD 5">
    <location>
        <begin position="1209"/>
        <end position="1249"/>
    </location>
</feature>
<feature type="repeat" description="WD 6">
    <location>
        <begin position="1251"/>
        <end position="1291"/>
    </location>
</feature>
<feature type="repeat" description="WD 7">
    <location>
        <begin position="1299"/>
        <end position="1335"/>
    </location>
</feature>
<feature type="region of interest" description="Disordered" evidence="2">
    <location>
        <begin position="749"/>
        <end position="771"/>
    </location>
</feature>
<feature type="region of interest" description="Disordered" evidence="2">
    <location>
        <begin position="853"/>
        <end position="942"/>
    </location>
</feature>
<feature type="compositionally biased region" description="Low complexity" evidence="2">
    <location>
        <begin position="755"/>
        <end position="771"/>
    </location>
</feature>
<feature type="compositionally biased region" description="Polar residues" evidence="2">
    <location>
        <begin position="853"/>
        <end position="866"/>
    </location>
</feature>
<feature type="compositionally biased region" description="Low complexity" evidence="2">
    <location>
        <begin position="877"/>
        <end position="887"/>
    </location>
</feature>
<feature type="compositionally biased region" description="Polar residues" evidence="2">
    <location>
        <begin position="888"/>
        <end position="898"/>
    </location>
</feature>
<feature type="modified residue" description="Phosphoserine" evidence="1">
    <location>
        <position position="44"/>
    </location>
</feature>
<feature type="modified residue" description="Phosphoserine" evidence="1">
    <location>
        <position position="122"/>
    </location>
</feature>
<feature type="modified residue" description="Phosphoserine; by MAPK8" evidence="1">
    <location>
        <position position="696"/>
    </location>
</feature>
<feature type="modified residue" description="Phosphothreonine; by MAPK8" evidence="1">
    <location>
        <position position="706"/>
    </location>
</feature>
<feature type="modified residue" description="Phosphoserine; by RPS6KA1" evidence="1">
    <location>
        <position position="719"/>
    </location>
</feature>
<feature type="modified residue" description="Phosphoserine; by RPS6KA1" evidence="1">
    <location>
        <position position="721"/>
    </location>
</feature>
<feature type="modified residue" description="Phosphoserine; by AMPK and RPS6KA1" evidence="4 11">
    <location>
        <position position="722"/>
    </location>
</feature>
<feature type="modified residue" description="Phosphoserine" evidence="1">
    <location>
        <position position="738"/>
    </location>
</feature>
<feature type="modified residue" description="Phosphoserine" evidence="1">
    <location>
        <position position="791"/>
    </location>
</feature>
<feature type="modified residue" description="Phosphoserine; by AMPK" evidence="4 11">
    <location>
        <position position="792"/>
    </location>
</feature>
<feature type="modified residue" description="Phosphoserine" evidence="1">
    <location>
        <position position="836"/>
    </location>
</feature>
<feature type="modified residue" description="Phosphoserine" evidence="1">
    <location>
        <position position="855"/>
    </location>
</feature>
<feature type="modified residue" description="Phosphoserine; by MTOR" evidence="5 19 20">
    <location>
        <position position="859"/>
    </location>
</feature>
<feature type="modified residue" description="Phosphoserine; by MAPK8, MTOR and NLK" evidence="5 7 19 20">
    <location>
        <position position="863"/>
    </location>
</feature>
<feature type="modified residue" description="Phosphothreonine" evidence="20">
    <location>
        <position position="865"/>
    </location>
</feature>
<feature type="modified residue" description="Phosphoserine" evidence="20">
    <location>
        <position position="877"/>
    </location>
</feature>
<feature type="modified residue" description="Phosphoserine" evidence="1">
    <location>
        <position position="982"/>
    </location>
</feature>
<feature type="modified residue" description="N6-acetyllysine" evidence="1">
    <location>
        <position position="1097"/>
    </location>
</feature>
<feature type="glycosylation site" description="O-linked (GlcNAc) threonine" evidence="1">
    <location>
        <position position="700"/>
    </location>
</feature>
<feature type="cross-link" description="Glycyl lysine isopeptide (Lys-Gly) (interchain with G-Cter in ubiquitin)" evidence="1">
    <location>
        <position position="932"/>
    </location>
</feature>
<feature type="cross-link" description="Glycyl lysine isopeptide (Lys-Gly) (interchain with G-Cter in ubiquitin)" evidence="1">
    <location>
        <position position="948"/>
    </location>
</feature>
<feature type="splice variant" id="VSP_010176" description="In isoform 4." evidence="14">
    <location>
        <begin position="1"/>
        <end position="954"/>
    </location>
</feature>
<feature type="splice variant" id="VSP_010177" description="In isoform 3." evidence="14">
    <location>
        <begin position="1"/>
        <end position="421"/>
    </location>
</feature>
<feature type="splice variant" id="VSP_010175" description="In isoform 2." evidence="14">
    <location>
        <begin position="1"/>
        <end position="185"/>
    </location>
</feature>
<feature type="splice variant" id="VSP_010178" description="In isoform 5." evidence="14">
    <location>
        <begin position="298"/>
        <end position="1335"/>
    </location>
</feature>
<feature type="splice variant" id="VSP_010179" description="In isoform 3." evidence="14">
    <original>EGGSLTPVRDSPCTPRLRSVSSYGNIRA</original>
    <variation>GTGVAGSLGPPSGPSPGQSVAWVQPGQV</variation>
    <location>
        <begin position="701"/>
        <end position="728"/>
    </location>
</feature>
<feature type="splice variant" id="VSP_010180" description="In isoform 3." evidence="14">
    <location>
        <begin position="729"/>
        <end position="1335"/>
    </location>
</feature>
<feature type="splice variant" id="VSP_010181" description="In isoform 2." evidence="14">
    <original>ATV</original>
    <variation>VCI</variation>
    <location>
        <begin position="841"/>
        <end position="843"/>
    </location>
</feature>
<feature type="splice variant" id="VSP_010182" description="In isoform 2." evidence="14">
    <location>
        <begin position="844"/>
        <end position="1335"/>
    </location>
</feature>
<feature type="splice variant" id="VSP_010183" description="In isoform 4." evidence="14">
    <original>C</original>
    <variation>W</variation>
    <location>
        <position position="1202"/>
    </location>
</feature>
<feature type="splice variant" id="VSP_010184" description="In isoform 4." evidence="14">
    <location>
        <begin position="1203"/>
        <end position="1335"/>
    </location>
</feature>
<feature type="mutagenesis site" description="Abolishes AMPK-mediated phosphorylation; when associated with A-792. In Raptor(AA) mutant; knockin mice display higher mTORC1 activity; when associated with A-792." evidence="4 11">
    <original>S</original>
    <variation>A</variation>
    <location>
        <position position="722"/>
    </location>
</feature>
<feature type="mutagenesis site" description="Abolishes AMPK-mediated phosphorylation; when associated with A-722. In Raptor(AA) mutant; knockin mice display higher mTORC1 activity; when associated with A-722." evidence="4 11">
    <original>S</original>
    <variation>A</variation>
    <location>
        <position position="792"/>
    </location>
</feature>
<feature type="mutagenesis site" description="Abolished phosphorylation by NLK, leading to impaired inhibition of the mTORC1 complex in response to osmotic stress." evidence="7">
    <original>S</original>
    <variation>A</variation>
    <location>
        <position position="863"/>
    </location>
</feature>
<feature type="sequence conflict" description="In Ref. 2; AK029341/BAB30288." evidence="16" ref="2">
    <original>S</original>
    <variation>F</variation>
    <location>
        <position position="630"/>
    </location>
</feature>
<feature type="sequence conflict" description="In Ref. 2; BAC30561." evidence="16" ref="2">
    <original>A</original>
    <variation>P</variation>
    <location>
        <position position="970"/>
    </location>
</feature>
<reference key="1">
    <citation type="journal article" date="2002" name="Cell">
        <title>Raptor, a binding partner of target of rapamycin (TOR), mediates TOR action.</title>
        <authorList>
            <person name="Hara K."/>
            <person name="Maruki Y."/>
            <person name="Long X."/>
            <person name="Yoshino K."/>
            <person name="Oshiro N."/>
            <person name="Hidayat S."/>
            <person name="Tokunaga C."/>
            <person name="Avruch J."/>
            <person name="Yonezawa K."/>
        </authorList>
    </citation>
    <scope>NUCLEOTIDE SEQUENCE [MRNA] (ISOFORM 1)</scope>
</reference>
<reference key="2">
    <citation type="journal article" date="2005" name="Science">
        <title>The transcriptional landscape of the mammalian genome.</title>
        <authorList>
            <person name="Carninci P."/>
            <person name="Kasukawa T."/>
            <person name="Katayama S."/>
            <person name="Gough J."/>
            <person name="Frith M.C."/>
            <person name="Maeda N."/>
            <person name="Oyama R."/>
            <person name="Ravasi T."/>
            <person name="Lenhard B."/>
            <person name="Wells C."/>
            <person name="Kodzius R."/>
            <person name="Shimokawa K."/>
            <person name="Bajic V.B."/>
            <person name="Brenner S.E."/>
            <person name="Batalov S."/>
            <person name="Forrest A.R."/>
            <person name="Zavolan M."/>
            <person name="Davis M.J."/>
            <person name="Wilming L.G."/>
            <person name="Aidinis V."/>
            <person name="Allen J.E."/>
            <person name="Ambesi-Impiombato A."/>
            <person name="Apweiler R."/>
            <person name="Aturaliya R.N."/>
            <person name="Bailey T.L."/>
            <person name="Bansal M."/>
            <person name="Baxter L."/>
            <person name="Beisel K.W."/>
            <person name="Bersano T."/>
            <person name="Bono H."/>
            <person name="Chalk A.M."/>
            <person name="Chiu K.P."/>
            <person name="Choudhary V."/>
            <person name="Christoffels A."/>
            <person name="Clutterbuck D.R."/>
            <person name="Crowe M.L."/>
            <person name="Dalla E."/>
            <person name="Dalrymple B.P."/>
            <person name="de Bono B."/>
            <person name="Della Gatta G."/>
            <person name="di Bernardo D."/>
            <person name="Down T."/>
            <person name="Engstrom P."/>
            <person name="Fagiolini M."/>
            <person name="Faulkner G."/>
            <person name="Fletcher C.F."/>
            <person name="Fukushima T."/>
            <person name="Furuno M."/>
            <person name="Futaki S."/>
            <person name="Gariboldi M."/>
            <person name="Georgii-Hemming P."/>
            <person name="Gingeras T.R."/>
            <person name="Gojobori T."/>
            <person name="Green R.E."/>
            <person name="Gustincich S."/>
            <person name="Harbers M."/>
            <person name="Hayashi Y."/>
            <person name="Hensch T.K."/>
            <person name="Hirokawa N."/>
            <person name="Hill D."/>
            <person name="Huminiecki L."/>
            <person name="Iacono M."/>
            <person name="Ikeo K."/>
            <person name="Iwama A."/>
            <person name="Ishikawa T."/>
            <person name="Jakt M."/>
            <person name="Kanapin A."/>
            <person name="Katoh M."/>
            <person name="Kawasawa Y."/>
            <person name="Kelso J."/>
            <person name="Kitamura H."/>
            <person name="Kitano H."/>
            <person name="Kollias G."/>
            <person name="Krishnan S.P."/>
            <person name="Kruger A."/>
            <person name="Kummerfeld S.K."/>
            <person name="Kurochkin I.V."/>
            <person name="Lareau L.F."/>
            <person name="Lazarevic D."/>
            <person name="Lipovich L."/>
            <person name="Liu J."/>
            <person name="Liuni S."/>
            <person name="McWilliam S."/>
            <person name="Madan Babu M."/>
            <person name="Madera M."/>
            <person name="Marchionni L."/>
            <person name="Matsuda H."/>
            <person name="Matsuzawa S."/>
            <person name="Miki H."/>
            <person name="Mignone F."/>
            <person name="Miyake S."/>
            <person name="Morris K."/>
            <person name="Mottagui-Tabar S."/>
            <person name="Mulder N."/>
            <person name="Nakano N."/>
            <person name="Nakauchi H."/>
            <person name="Ng P."/>
            <person name="Nilsson R."/>
            <person name="Nishiguchi S."/>
            <person name="Nishikawa S."/>
            <person name="Nori F."/>
            <person name="Ohara O."/>
            <person name="Okazaki Y."/>
            <person name="Orlando V."/>
            <person name="Pang K.C."/>
            <person name="Pavan W.J."/>
            <person name="Pavesi G."/>
            <person name="Pesole G."/>
            <person name="Petrovsky N."/>
            <person name="Piazza S."/>
            <person name="Reed J."/>
            <person name="Reid J.F."/>
            <person name="Ring B.Z."/>
            <person name="Ringwald M."/>
            <person name="Rost B."/>
            <person name="Ruan Y."/>
            <person name="Salzberg S.L."/>
            <person name="Sandelin A."/>
            <person name="Schneider C."/>
            <person name="Schoenbach C."/>
            <person name="Sekiguchi K."/>
            <person name="Semple C.A."/>
            <person name="Seno S."/>
            <person name="Sessa L."/>
            <person name="Sheng Y."/>
            <person name="Shibata Y."/>
            <person name="Shimada H."/>
            <person name="Shimada K."/>
            <person name="Silva D."/>
            <person name="Sinclair B."/>
            <person name="Sperling S."/>
            <person name="Stupka E."/>
            <person name="Sugiura K."/>
            <person name="Sultana R."/>
            <person name="Takenaka Y."/>
            <person name="Taki K."/>
            <person name="Tammoja K."/>
            <person name="Tan S.L."/>
            <person name="Tang S."/>
            <person name="Taylor M.S."/>
            <person name="Tegner J."/>
            <person name="Teichmann S.A."/>
            <person name="Ueda H.R."/>
            <person name="van Nimwegen E."/>
            <person name="Verardo R."/>
            <person name="Wei C.L."/>
            <person name="Yagi K."/>
            <person name="Yamanishi H."/>
            <person name="Zabarovsky E."/>
            <person name="Zhu S."/>
            <person name="Zimmer A."/>
            <person name="Hide W."/>
            <person name="Bult C."/>
            <person name="Grimmond S.M."/>
            <person name="Teasdale R.D."/>
            <person name="Liu E.T."/>
            <person name="Brusic V."/>
            <person name="Quackenbush J."/>
            <person name="Wahlestedt C."/>
            <person name="Mattick J.S."/>
            <person name="Hume D.A."/>
            <person name="Kai C."/>
            <person name="Sasaki D."/>
            <person name="Tomaru Y."/>
            <person name="Fukuda S."/>
            <person name="Kanamori-Katayama M."/>
            <person name="Suzuki M."/>
            <person name="Aoki J."/>
            <person name="Arakawa T."/>
            <person name="Iida J."/>
            <person name="Imamura K."/>
            <person name="Itoh M."/>
            <person name="Kato T."/>
            <person name="Kawaji H."/>
            <person name="Kawagashira N."/>
            <person name="Kawashima T."/>
            <person name="Kojima M."/>
            <person name="Kondo S."/>
            <person name="Konno H."/>
            <person name="Nakano K."/>
            <person name="Ninomiya N."/>
            <person name="Nishio T."/>
            <person name="Okada M."/>
            <person name="Plessy C."/>
            <person name="Shibata K."/>
            <person name="Shiraki T."/>
            <person name="Suzuki S."/>
            <person name="Tagami M."/>
            <person name="Waki K."/>
            <person name="Watahiki A."/>
            <person name="Okamura-Oho Y."/>
            <person name="Suzuki H."/>
            <person name="Kawai J."/>
            <person name="Hayashizaki Y."/>
        </authorList>
    </citation>
    <scope>NUCLEOTIDE SEQUENCE [LARGE SCALE MRNA] (ISOFORMS 2; 3; 4 AND 5)</scope>
    <source>
        <strain>C57BL/6J</strain>
        <tissue>Diencephalon</tissue>
        <tissue>Head</tissue>
        <tissue>Testis</tissue>
        <tissue>Thymus</tissue>
    </source>
</reference>
<reference key="3">
    <citation type="journal article" date="2004" name="Mol. Cell. Proteomics">
        <title>Phosphoproteomic analysis of the developing mouse brain.</title>
        <authorList>
            <person name="Ballif B.A."/>
            <person name="Villen J."/>
            <person name="Beausoleil S.A."/>
            <person name="Schwartz D."/>
            <person name="Gygi S.P."/>
        </authorList>
    </citation>
    <scope>IDENTIFICATION BY MASS SPECTROMETRY [LARGE SCALE ANALYSIS]</scope>
    <source>
        <tissue>Embryonic brain</tissue>
    </source>
</reference>
<reference key="4">
    <citation type="journal article" date="2006" name="Dev. Cell">
        <title>Ablation in mice of the mTORC components raptor, rictor, or mLST8 reveals that mTORC2 is required for signaling to Akt-FOXO and PKCalpha, but not S6K1.</title>
        <authorList>
            <person name="Guertin D.A."/>
            <person name="Stevens D.M."/>
            <person name="Thoreen C.C."/>
            <person name="Burds A.A."/>
            <person name="Kalaany N.Y."/>
            <person name="Moffat J."/>
            <person name="Brown M."/>
            <person name="Fitzgerald K.J."/>
            <person name="Sabatini D.M."/>
        </authorList>
    </citation>
    <scope>DISRUPTION PHENOTYPE</scope>
</reference>
<reference key="5">
    <citation type="journal article" date="2008" name="Mol. Cell">
        <title>AMPK phosphorylation of raptor mediates a metabolic checkpoint.</title>
        <authorList>
            <person name="Gwinn D.M."/>
            <person name="Shackelford D.B."/>
            <person name="Egan D.F."/>
            <person name="Mihaylova M.M."/>
            <person name="Mery A."/>
            <person name="Vasquez D.S."/>
            <person name="Turk B.E."/>
            <person name="Shaw R.J."/>
        </authorList>
    </citation>
    <scope>PHOSPHORYLATION AT SER-722 AND SER-792</scope>
    <scope>MUTAGENESIS OF SER-722 AND SER-792</scope>
</reference>
<reference key="6">
    <citation type="journal article" date="2009" name="Immunity">
        <title>The phagosomal proteome in interferon-gamma-activated macrophages.</title>
        <authorList>
            <person name="Trost M."/>
            <person name="English L."/>
            <person name="Lemieux S."/>
            <person name="Courcelles M."/>
            <person name="Desjardins M."/>
            <person name="Thibault P."/>
        </authorList>
    </citation>
    <scope>PHOSPHORYLATION [LARGE SCALE ANALYSIS] AT SER-859 AND SER-863</scope>
    <scope>IDENTIFICATION BY MASS SPECTROMETRY [LARGE SCALE ANALYSIS]</scope>
</reference>
<reference key="7">
    <citation type="journal article" date="2009" name="J. Biol. Chem.">
        <title>Mammalian target of rapamycin complex 1 (mTORC1) activity is associated with phosphorylation of raptor by mTOR.</title>
        <authorList>
            <person name="Wang L."/>
            <person name="Lawrence J.C. Jr."/>
            <person name="Sturgill T.W."/>
            <person name="Harris T.E."/>
        </authorList>
    </citation>
    <scope>PHOSPHORYLATION AT SER-859 AND SER-863 BY MTOR</scope>
</reference>
<reference key="8">
    <citation type="journal article" date="2010" name="Cell">
        <title>A tissue-specific atlas of mouse protein phosphorylation and expression.</title>
        <authorList>
            <person name="Huttlin E.L."/>
            <person name="Jedrychowski M.P."/>
            <person name="Elias J.E."/>
            <person name="Goswami T."/>
            <person name="Rad R."/>
            <person name="Beausoleil S.A."/>
            <person name="Villen J."/>
            <person name="Haas W."/>
            <person name="Sowa M.E."/>
            <person name="Gygi S.P."/>
        </authorList>
    </citation>
    <scope>PHOSPHORYLATION [LARGE SCALE ANALYSIS] AT SER-859; SER-863; THR-865 AND SER-877</scope>
    <scope>IDENTIFICATION BY MASS SPECTROMETRY [LARGE SCALE ANALYSIS]</scope>
    <source>
        <tissue>Brain</tissue>
        <tissue>Brown adipose tissue</tissue>
        <tissue>Heart</tissue>
        <tissue>Kidney</tissue>
        <tissue>Liver</tissue>
        <tissue>Lung</tissue>
        <tissue>Pancreas</tissue>
        <tissue>Spleen</tissue>
        <tissue>Testis</tissue>
    </source>
</reference>
<reference key="9">
    <citation type="journal article" date="2010" name="Genes Dev.">
        <title>Tel2 structure and function in the Hsp90-dependent maturation of mTOR and ATR complexes.</title>
        <authorList>
            <person name="Takai H."/>
            <person name="Xie Y."/>
            <person name="de Lange T."/>
            <person name="Pavletich N.P."/>
        </authorList>
    </citation>
    <scope>INTERACTION WITH MTOR</scope>
</reference>
<reference key="10">
    <citation type="journal article" date="2015" name="Genes Dev.">
        <title>NLK phosphorylates Raptor to mediate stress-induced mTORC1 inhibition.</title>
        <authorList>
            <person name="Yuan H.X."/>
            <person name="Wang Z."/>
            <person name="Yu F.X."/>
            <person name="Li F."/>
            <person name="Russell R.C."/>
            <person name="Jewell J.L."/>
            <person name="Guan K.L."/>
        </authorList>
    </citation>
    <scope>PHOSPHORYLATION AT SER-863</scope>
    <scope>MUTAGENESIS OF SER-863</scope>
</reference>
<reference key="11">
    <citation type="journal article" date="2017" name="J. Biol. Chem.">
        <title>Inactivation of regulatory-associated protein of mTOR (Raptor)/mammalian target of rapamycin complex 1 (mTORC1) signaling in osteoclasts increases bone mass by inhibiting osteoclast differentiation in mice.</title>
        <authorList>
            <person name="Dai Q."/>
            <person name="Xie F."/>
            <person name="Han Y."/>
            <person name="Ma X."/>
            <person name="Zhou S."/>
            <person name="Jiang L."/>
            <person name="Zou W."/>
            <person name="Wang J."/>
        </authorList>
    </citation>
    <scope>FUNCTION</scope>
    <scope>DISRUPTION PHENOTYPE</scope>
</reference>
<reference key="12">
    <citation type="journal article" date="2019" name="Cell Metab.">
        <title>Leucine signals to mTORC1 via its metabolite acetyl-coenzyme A.</title>
        <authorList>
            <person name="Son S.M."/>
            <person name="Park S.J."/>
            <person name="Lee H."/>
            <person name="Siddiqi F."/>
            <person name="Lee J.E."/>
            <person name="Menzies F.M."/>
            <person name="Rubinsztein D.C."/>
        </authorList>
    </citation>
    <scope>ACETYLATION</scope>
</reference>
<reference key="13">
    <citation type="journal article" date="2019" name="Elife">
        <title>GPCR signaling inhibits mTORC1 via PKA phosphorylation of Raptor.</title>
        <authorList>
            <person name="Jewell J.L."/>
            <person name="Fu V."/>
            <person name="Hong A.W."/>
            <person name="Yu F.X."/>
            <person name="Meng D."/>
            <person name="Melick C.H."/>
            <person name="Wang H."/>
            <person name="Lam W.M."/>
            <person name="Yuan H.X."/>
            <person name="Taylor S.S."/>
            <person name="Guan K.L."/>
        </authorList>
    </citation>
    <scope>PHOSPHORYLATION</scope>
</reference>
<reference key="14">
    <citation type="journal article" date="2019" name="Front. Physiol.">
        <title>Conditional knockout of Raptor/mTORC1 results in dentin malformation.</title>
        <authorList>
            <person name="Xie F."/>
            <person name="Dai Q."/>
            <person name="Liu X."/>
            <person name="Wang J."/>
        </authorList>
    </citation>
    <scope>FUNCTION</scope>
    <scope>DISRUPTION PHENOTYPE</scope>
</reference>
<reference key="15">
    <citation type="journal article" date="2020" name="Genes Dev.">
        <title>AMPK regulation of Raptor and TSC2 mediate metformin effects on transcriptional control of anabolism and inflammation.</title>
        <authorList>
            <person name="Van Nostrand J.L."/>
            <person name="Hellberg K."/>
            <person name="Luo E.C."/>
            <person name="Van Nostrand E.L."/>
            <person name="Dayn A."/>
            <person name="Yu J."/>
            <person name="Shokhirev M.N."/>
            <person name="Dayn Y."/>
            <person name="Yeo G.W."/>
            <person name="Shaw R.J."/>
        </authorList>
    </citation>
    <scope>FUNCTION</scope>
    <scope>PHOSPHORYLATION AT SER-722 AND SER-792</scope>
    <scope>MUTAGENESIS OF SER-722 AND SER-792</scope>
</reference>
<reference key="16">
    <citation type="journal article" date="2021" name="Proc. Natl. Acad. Sci. U.S.A.">
        <title>Lysergic acid diethylamide (LSD) promotes social behavior through mTORC1 in the excitatory neurotransmission.</title>
        <authorList>
            <person name="De Gregorio D."/>
            <person name="Popic J."/>
            <person name="Enns J.P."/>
            <person name="Inserra A."/>
            <person name="Skalecka A."/>
            <person name="Markopoulos A."/>
            <person name="Posa L."/>
            <person name="Lopez-Canul M."/>
            <person name="Qianzi H."/>
            <person name="Lafferty C.K."/>
            <person name="Britt J.P."/>
            <person name="Comai S."/>
            <person name="Aguilar-Valles A."/>
            <person name="Sonenberg N."/>
            <person name="Gobbi G."/>
        </authorList>
    </citation>
    <scope>DISRUPTION PHENOTYPE</scope>
    <scope>FUNCTION</scope>
</reference>
<gene>
    <name evidence="18" type="primary">Rptor</name>
    <name evidence="15" type="synonym">Raptor</name>
</gene>
<organism>
    <name type="scientific">Mus musculus</name>
    <name type="common">Mouse</name>
    <dbReference type="NCBI Taxonomy" id="10090"/>
    <lineage>
        <taxon>Eukaryota</taxon>
        <taxon>Metazoa</taxon>
        <taxon>Chordata</taxon>
        <taxon>Craniata</taxon>
        <taxon>Vertebrata</taxon>
        <taxon>Euteleostomi</taxon>
        <taxon>Mammalia</taxon>
        <taxon>Eutheria</taxon>
        <taxon>Euarchontoglires</taxon>
        <taxon>Glires</taxon>
        <taxon>Rodentia</taxon>
        <taxon>Myomorpha</taxon>
        <taxon>Muroidea</taxon>
        <taxon>Muridae</taxon>
        <taxon>Murinae</taxon>
        <taxon>Mus</taxon>
        <taxon>Mus</taxon>
    </lineage>
</organism>
<evidence type="ECO:0000250" key="1">
    <source>
        <dbReference type="UniProtKB" id="Q8N122"/>
    </source>
</evidence>
<evidence type="ECO:0000256" key="2">
    <source>
        <dbReference type="SAM" id="MobiDB-lite"/>
    </source>
</evidence>
<evidence type="ECO:0000269" key="3">
    <source>
    </source>
</evidence>
<evidence type="ECO:0000269" key="4">
    <source>
    </source>
</evidence>
<evidence type="ECO:0000269" key="5">
    <source>
    </source>
</evidence>
<evidence type="ECO:0000269" key="6">
    <source>
    </source>
</evidence>
<evidence type="ECO:0000269" key="7">
    <source>
    </source>
</evidence>
<evidence type="ECO:0000269" key="8">
    <source>
    </source>
</evidence>
<evidence type="ECO:0000269" key="9">
    <source>
    </source>
</evidence>
<evidence type="ECO:0000269" key="10">
    <source>
    </source>
</evidence>
<evidence type="ECO:0000269" key="11">
    <source>
    </source>
</evidence>
<evidence type="ECO:0000269" key="12">
    <source>
    </source>
</evidence>
<evidence type="ECO:0000303" key="13">
    <source>
    </source>
</evidence>
<evidence type="ECO:0000303" key="14">
    <source>
    </source>
</evidence>
<evidence type="ECO:0000303" key="15">
    <source>
    </source>
</evidence>
<evidence type="ECO:0000305" key="16"/>
<evidence type="ECO:0000305" key="17">
    <source>
    </source>
</evidence>
<evidence type="ECO:0000312" key="18">
    <source>
        <dbReference type="MGI" id="MGI:1921620"/>
    </source>
</evidence>
<evidence type="ECO:0007744" key="19">
    <source>
    </source>
</evidence>
<evidence type="ECO:0007744" key="20">
    <source>
    </source>
</evidence>
<protein>
    <recommendedName>
        <fullName evidence="16">Regulatory-associated protein of mTOR</fullName>
        <shortName evidence="15">Raptor</shortName>
    </recommendedName>
    <alternativeName>
        <fullName evidence="13">p150 target of rapamycin (TOR)-scaffold protein</fullName>
    </alternativeName>
</protein>
<dbReference type="EMBL" id="AB082952">
    <property type="protein sequence ID" value="BAC06491.1"/>
    <property type="molecule type" value="mRNA"/>
</dbReference>
<dbReference type="EMBL" id="AK016530">
    <property type="protein sequence ID" value="BAB30288.1"/>
    <property type="molecule type" value="mRNA"/>
</dbReference>
<dbReference type="EMBL" id="AK029341">
    <property type="status" value="NOT_ANNOTATED_CDS"/>
    <property type="molecule type" value="mRNA"/>
</dbReference>
<dbReference type="EMBL" id="AK034306">
    <property type="protein sequence ID" value="BAC28669.1"/>
    <property type="molecule type" value="mRNA"/>
</dbReference>
<dbReference type="EMBL" id="AK040288">
    <property type="protein sequence ID" value="BAC30561.1"/>
    <property type="molecule type" value="mRNA"/>
</dbReference>
<dbReference type="CCDS" id="CCDS25720.1">
    <molecule id="Q8K4Q0-1"/>
</dbReference>
<dbReference type="SMR" id="Q8K4Q0"/>
<dbReference type="ComplexPortal" id="CPX-4473">
    <property type="entry name" value="mTORC1 complex"/>
</dbReference>
<dbReference type="DIP" id="DIP-46324N"/>
<dbReference type="FunCoup" id="Q8K4Q0">
    <property type="interactions" value="2656"/>
</dbReference>
<dbReference type="IntAct" id="Q8K4Q0">
    <property type="interactions" value="7"/>
</dbReference>
<dbReference type="MINT" id="Q8K4Q0"/>
<dbReference type="STRING" id="10090.ENSMUSP00000026671"/>
<dbReference type="GlyGen" id="Q8K4Q0">
    <property type="glycosylation" value="4 sites, 1 N-linked glycan (1 site), 1 O-linked glycan (1 site)"/>
</dbReference>
<dbReference type="iPTMnet" id="Q8K4Q0"/>
<dbReference type="PhosphoSitePlus" id="Q8K4Q0"/>
<dbReference type="SwissPalm" id="Q8K4Q0"/>
<dbReference type="jPOST" id="Q8K4Q0"/>
<dbReference type="PaxDb" id="10090-ENSMUSP00000026671"/>
<dbReference type="PeptideAtlas" id="Q8K4Q0"/>
<dbReference type="ProteomicsDB" id="299809">
    <molecule id="Q8K4Q0-1"/>
</dbReference>
<dbReference type="ProteomicsDB" id="299810">
    <molecule id="Q8K4Q0-2"/>
</dbReference>
<dbReference type="ProteomicsDB" id="299811">
    <molecule id="Q8K4Q0-3"/>
</dbReference>
<dbReference type="ProteomicsDB" id="299812">
    <molecule id="Q8K4Q0-4"/>
</dbReference>
<dbReference type="ProteomicsDB" id="299813">
    <molecule id="Q8K4Q0-5"/>
</dbReference>
<dbReference type="Pumba" id="Q8K4Q0"/>
<dbReference type="UCSC" id="uc007mqw.1">
    <molecule id="Q8K4Q0-5"/>
    <property type="organism name" value="mouse"/>
</dbReference>
<dbReference type="UCSC" id="uc007mra.1">
    <molecule id="Q8K4Q0-1"/>
    <property type="organism name" value="mouse"/>
</dbReference>
<dbReference type="AGR" id="MGI:1921620"/>
<dbReference type="MGI" id="MGI:1921620">
    <property type="gene designation" value="Rptor"/>
</dbReference>
<dbReference type="eggNOG" id="KOG1517">
    <property type="taxonomic scope" value="Eukaryota"/>
</dbReference>
<dbReference type="InParanoid" id="Q8K4Q0"/>
<dbReference type="OrthoDB" id="10262360at2759"/>
<dbReference type="PhylomeDB" id="Q8K4Q0"/>
<dbReference type="Reactome" id="R-MMU-1632852">
    <property type="pathway name" value="Macroautophagy"/>
</dbReference>
<dbReference type="Reactome" id="R-MMU-165159">
    <property type="pathway name" value="MTOR signalling"/>
</dbReference>
<dbReference type="Reactome" id="R-MMU-166208">
    <property type="pathway name" value="mTORC1-mediated signalling"/>
</dbReference>
<dbReference type="Reactome" id="R-MMU-3371571">
    <property type="pathway name" value="HSF1-dependent transactivation"/>
</dbReference>
<dbReference type="Reactome" id="R-MMU-380972">
    <property type="pathway name" value="Energy dependent regulation of mTOR by LKB1-AMPK"/>
</dbReference>
<dbReference type="Reactome" id="R-MMU-5628897">
    <property type="pathway name" value="TP53 Regulates Metabolic Genes"/>
</dbReference>
<dbReference type="Reactome" id="R-MMU-8943724">
    <property type="pathway name" value="Regulation of PTEN gene transcription"/>
</dbReference>
<dbReference type="Reactome" id="R-MMU-9639288">
    <property type="pathway name" value="Amino acids regulate mTORC1"/>
</dbReference>
<dbReference type="ChiTaRS" id="Rptor">
    <property type="organism name" value="mouse"/>
</dbReference>
<dbReference type="PRO" id="PR:Q8K4Q0"/>
<dbReference type="Proteomes" id="UP000000589">
    <property type="component" value="Unplaced"/>
</dbReference>
<dbReference type="RNAct" id="Q8K4Q0">
    <property type="molecule type" value="protein"/>
</dbReference>
<dbReference type="GO" id="GO:0005737">
    <property type="term" value="C:cytoplasm"/>
    <property type="evidence" value="ECO:0000250"/>
    <property type="project" value="UniProtKB"/>
</dbReference>
<dbReference type="GO" id="GO:0010494">
    <property type="term" value="C:cytoplasmic stress granule"/>
    <property type="evidence" value="ECO:0000250"/>
    <property type="project" value="UniProtKB"/>
</dbReference>
<dbReference type="GO" id="GO:0005764">
    <property type="term" value="C:lysosome"/>
    <property type="evidence" value="ECO:0000250"/>
    <property type="project" value="UniProtKB"/>
</dbReference>
<dbReference type="GO" id="GO:0031931">
    <property type="term" value="C:TORC1 complex"/>
    <property type="evidence" value="ECO:0000250"/>
    <property type="project" value="UniProtKB"/>
</dbReference>
<dbReference type="GO" id="GO:0140767">
    <property type="term" value="F:enzyme-substrate adaptor activity"/>
    <property type="evidence" value="ECO:0000250"/>
    <property type="project" value="UniProtKB"/>
</dbReference>
<dbReference type="GO" id="GO:0030674">
    <property type="term" value="F:protein-macromolecule adaptor activity"/>
    <property type="evidence" value="ECO:0000250"/>
    <property type="project" value="UniProtKB"/>
</dbReference>
<dbReference type="GO" id="GO:0031267">
    <property type="term" value="F:small GTPase binding"/>
    <property type="evidence" value="ECO:0000250"/>
    <property type="project" value="UniProtKB"/>
</dbReference>
<dbReference type="GO" id="GO:0071230">
    <property type="term" value="P:cellular response to amino acid stimulus"/>
    <property type="evidence" value="ECO:0000250"/>
    <property type="project" value="UniProtKB"/>
</dbReference>
<dbReference type="GO" id="GO:0071333">
    <property type="term" value="P:cellular response to glucose stimulus"/>
    <property type="evidence" value="ECO:0000250"/>
    <property type="project" value="UniProtKB"/>
</dbReference>
<dbReference type="GO" id="GO:0071456">
    <property type="term" value="P:cellular response to hypoxia"/>
    <property type="evidence" value="ECO:0000303"/>
    <property type="project" value="ComplexPortal"/>
</dbReference>
<dbReference type="GO" id="GO:0031669">
    <property type="term" value="P:cellular response to nutrient levels"/>
    <property type="evidence" value="ECO:0000303"/>
    <property type="project" value="ComplexPortal"/>
</dbReference>
<dbReference type="GO" id="GO:0071470">
    <property type="term" value="P:cellular response to osmotic stress"/>
    <property type="evidence" value="ECO:0000303"/>
    <property type="project" value="ComplexPortal"/>
</dbReference>
<dbReference type="GO" id="GO:0006974">
    <property type="term" value="P:DNA damage response"/>
    <property type="evidence" value="ECO:0000303"/>
    <property type="project" value="ComplexPortal"/>
</dbReference>
<dbReference type="GO" id="GO:0010507">
    <property type="term" value="P:negative regulation of autophagy"/>
    <property type="evidence" value="ECO:0000303"/>
    <property type="project" value="ComplexPortal"/>
</dbReference>
<dbReference type="GO" id="GO:0046676">
    <property type="term" value="P:negative regulation of insulin secretion"/>
    <property type="evidence" value="ECO:0000315"/>
    <property type="project" value="CACAO"/>
</dbReference>
<dbReference type="GO" id="GO:0030307">
    <property type="term" value="P:positive regulation of cell growth"/>
    <property type="evidence" value="ECO:0000303"/>
    <property type="project" value="ComplexPortal"/>
</dbReference>
<dbReference type="GO" id="GO:0045821">
    <property type="term" value="P:positive regulation of glycolytic process"/>
    <property type="evidence" value="ECO:0000303"/>
    <property type="project" value="ComplexPortal"/>
</dbReference>
<dbReference type="GO" id="GO:0046889">
    <property type="term" value="P:positive regulation of lipid biosynthetic process"/>
    <property type="evidence" value="ECO:0000303"/>
    <property type="project" value="ComplexPortal"/>
</dbReference>
<dbReference type="GO" id="GO:1901331">
    <property type="term" value="P:positive regulation of odontoblast differentiation"/>
    <property type="evidence" value="ECO:0000315"/>
    <property type="project" value="UniProtKB"/>
</dbReference>
<dbReference type="GO" id="GO:0045672">
    <property type="term" value="P:positive regulation of osteoclast differentiation"/>
    <property type="evidence" value="ECO:0000315"/>
    <property type="project" value="UniProtKB"/>
</dbReference>
<dbReference type="GO" id="GO:1905857">
    <property type="term" value="P:positive regulation of pentose-phosphate shunt"/>
    <property type="evidence" value="ECO:0000303"/>
    <property type="project" value="ComplexPortal"/>
</dbReference>
<dbReference type="GO" id="GO:0032008">
    <property type="term" value="P:positive regulation of TOR signaling"/>
    <property type="evidence" value="ECO:0000250"/>
    <property type="project" value="UniProtKB"/>
</dbReference>
<dbReference type="GO" id="GO:0001558">
    <property type="term" value="P:regulation of cell growth"/>
    <property type="evidence" value="ECO:0000250"/>
    <property type="project" value="UniProtKB"/>
</dbReference>
<dbReference type="GO" id="GO:0001932">
    <property type="term" value="P:regulation of protein phosphorylation"/>
    <property type="evidence" value="ECO:0000315"/>
    <property type="project" value="CACAO"/>
</dbReference>
<dbReference type="GO" id="GO:0009410">
    <property type="term" value="P:response to xenobiotic stimulus"/>
    <property type="evidence" value="ECO:0000315"/>
    <property type="project" value="UniProtKB"/>
</dbReference>
<dbReference type="GO" id="GO:0035176">
    <property type="term" value="P:social behavior"/>
    <property type="evidence" value="ECO:0000315"/>
    <property type="project" value="UniProtKB"/>
</dbReference>
<dbReference type="GO" id="GO:0031929">
    <property type="term" value="P:TOR signaling"/>
    <property type="evidence" value="ECO:0000250"/>
    <property type="project" value="UniProtKB"/>
</dbReference>
<dbReference type="GO" id="GO:0038202">
    <property type="term" value="P:TORC1 signaling"/>
    <property type="evidence" value="ECO:0000315"/>
    <property type="project" value="UniProtKB"/>
</dbReference>
<dbReference type="FunFam" id="2.130.10.10:FF:000137">
    <property type="entry name" value="Regulatory-associated protein of mTOR isoform 1"/>
    <property type="match status" value="1"/>
</dbReference>
<dbReference type="FunFam" id="1.25.10.10:FF:000065">
    <property type="entry name" value="Regulatory-associated protein of MTOR, complex 1"/>
    <property type="match status" value="1"/>
</dbReference>
<dbReference type="FunFam" id="2.130.10.10:FF:000072">
    <property type="entry name" value="Regulatory-associated protein of MTOR, complex 1"/>
    <property type="match status" value="1"/>
</dbReference>
<dbReference type="Gene3D" id="1.25.10.10">
    <property type="entry name" value="Leucine-rich Repeat Variant"/>
    <property type="match status" value="1"/>
</dbReference>
<dbReference type="Gene3D" id="2.130.10.10">
    <property type="entry name" value="YVTN repeat-like/Quinoprotein amine dehydrogenase"/>
    <property type="match status" value="2"/>
</dbReference>
<dbReference type="InterPro" id="IPR011989">
    <property type="entry name" value="ARM-like"/>
</dbReference>
<dbReference type="InterPro" id="IPR016024">
    <property type="entry name" value="ARM-type_fold"/>
</dbReference>
<dbReference type="InterPro" id="IPR000357">
    <property type="entry name" value="HEAT"/>
</dbReference>
<dbReference type="InterPro" id="IPR004083">
    <property type="entry name" value="Raptor"/>
</dbReference>
<dbReference type="InterPro" id="IPR029347">
    <property type="entry name" value="Raptor_N"/>
</dbReference>
<dbReference type="InterPro" id="IPR015943">
    <property type="entry name" value="WD40/YVTN_repeat-like_dom_sf"/>
</dbReference>
<dbReference type="InterPro" id="IPR036322">
    <property type="entry name" value="WD40_repeat_dom_sf"/>
</dbReference>
<dbReference type="InterPro" id="IPR001680">
    <property type="entry name" value="WD40_rpt"/>
</dbReference>
<dbReference type="PANTHER" id="PTHR12848">
    <property type="entry name" value="REGULATORY-ASSOCIATED PROTEIN OF MTOR"/>
    <property type="match status" value="1"/>
</dbReference>
<dbReference type="PANTHER" id="PTHR12848:SF16">
    <property type="entry name" value="REGULATORY-ASSOCIATED PROTEIN OF MTOR"/>
    <property type="match status" value="1"/>
</dbReference>
<dbReference type="Pfam" id="PF02985">
    <property type="entry name" value="HEAT"/>
    <property type="match status" value="2"/>
</dbReference>
<dbReference type="Pfam" id="PF14538">
    <property type="entry name" value="Raptor_N"/>
    <property type="match status" value="1"/>
</dbReference>
<dbReference type="Pfam" id="PF00400">
    <property type="entry name" value="WD40"/>
    <property type="match status" value="1"/>
</dbReference>
<dbReference type="PRINTS" id="PR01547">
    <property type="entry name" value="YEAST176DUF"/>
</dbReference>
<dbReference type="SMART" id="SM01302">
    <property type="entry name" value="Raptor_N"/>
    <property type="match status" value="1"/>
</dbReference>
<dbReference type="SMART" id="SM00320">
    <property type="entry name" value="WD40"/>
    <property type="match status" value="7"/>
</dbReference>
<dbReference type="SUPFAM" id="SSF48371">
    <property type="entry name" value="ARM repeat"/>
    <property type="match status" value="1"/>
</dbReference>
<dbReference type="SUPFAM" id="SSF50978">
    <property type="entry name" value="WD40 repeat-like"/>
    <property type="match status" value="1"/>
</dbReference>
<dbReference type="PROSITE" id="PS50294">
    <property type="entry name" value="WD_REPEATS_REGION"/>
    <property type="match status" value="1"/>
</dbReference>
<name>RPTOR_MOUSE</name>
<sequence length="1335" mass="149471">MESEMLQSPLMGLGEEDEADLTDWNLPLAFMKKRHCEKIEGSKSLAQSWRMKDRMKTVSVALVLCLNVGVDPPDVVKTTPCARLECWIDPLSMGPQKALETIGANLQKQYENWQPRARYKQSLDPTVDEVKKLCTSLRRNAKEERVLFHYNGHGVPRPTVNGEVWVFNKNYTQYIPLSIYDLQTWMGSPSIFVYDCSNAGLIVKSFKQFALQREQELEVAAINPNHPLAQMPLPPSMKNCIQLAACEAHELLPMIPDLPADLFTSCLTTPIKIALRWFCMQKCVSLVPGVTLDLIEKIPGRLNDRRTPLGELNWIFTAITDTIAWNVLPRDLFQKLFRQDLLVASLFRNFLLAERIMRSYNCTPVSSPRLPPTYMHAMWQAWDLAVDICLSQLPTIIEEGTAFRHSPFFAEQLTAFQVWLTMGVENRSPPEQLPIVLQVLLSQVHRLRALDLLGRFLDLGPWAVSLALSVGIFPYVLKLLQSSARELRPLLVFIWAKILAVDSSCQADLVKDNGHKYFLSVLADPYMPAEHRTMTAFILAVIVNSYTTGQEACLQGNLIAICLEQLSDPHPLLRQWVAICLGRIWQNFDSARWCGVRDSAHEKLYSLLSDPIPEVRCAAVFALGTFVGNSAERTDHSTTIDHNVAMMLAQLINDGSPMVRKELVVALSHLVVQYESNFCTVALQFMEEEKNYPLPSPAATEGGSLTPVRDSPCTPRLRSVSSYGNIRAVTTARNLNKSLQNLSLTEESGSSVAFSPGNLSTSSSASSTLGSPENEEYILSFETIDKMRRVSSYSALNSLIGVSFNSVYTQIWRVLLHLAADPYPDVSDLAMKVLNSIAYKATVNARPQRILDTSSLTQSAPASPTNKGMHMHQVGGSPPASSTSSCSLTNDVAKQTVSRDLPSSRPGTAGPTGAQYTPHSHQFPRTRKMFDKGPDQTTDDADDAAGHKSFICASMQTGFCDWSARYFAQAVMKIPEEHDLESQIRKEREWRFLRNTRVRKQAQQVIQKGITRLDDQIFLNRNPGVPSVVKFHPFTPCIAVADKDSICFWDWEKGEKLDYFHNGNPRYTRVTAMEYLNGQDCSLLLTATDDGAIRVWKNFADLEKNPEMVTAWQGLSDMLPTTRGAGMVVDWEQETGLLMSSGDVRIVRIWDTDRETKVQDIPTGADSCVTSLSCDSHRSLIVAGLGDGSIRVYDRRMALSECRVMTYREHTAWVVKAYLQKHPEGHIVSVSVNGDVRFFDPRMPESVNVMQIVKGLTALDIHPQANLIACGSMNQFTAIYNGNGELINNIKYYDGFMGQRVGAISCLAFHPHWPHLAVGSNDYYISVYSVEKRVR</sequence>
<accession>Q8K4Q0</accession>
<accession>Q8C9W9</accession>
<accession>Q8CBY4</accession>
<accession>Q8CDY8</accession>
<accession>Q9D4H3</accession>
<keyword id="KW-0007">Acetylation</keyword>
<keyword id="KW-0025">Alternative splicing</keyword>
<keyword id="KW-0963">Cytoplasm</keyword>
<keyword id="KW-0325">Glycoprotein</keyword>
<keyword id="KW-1017">Isopeptide bond</keyword>
<keyword id="KW-0458">Lysosome</keyword>
<keyword id="KW-0597">Phosphoprotein</keyword>
<keyword id="KW-1185">Reference proteome</keyword>
<keyword id="KW-0677">Repeat</keyword>
<keyword id="KW-0832">Ubl conjugation</keyword>
<keyword id="KW-0853">WD repeat</keyword>
<comment type="function">
    <text evidence="1 8 10 11 12">Component of the mechanistic target of rapamycin complex 1 (mTORC1), an evolutionarily conserved central nutrient sensor that stimulates anabolic reactions and macromolecule biosynthesis to promote cellular biomass generation and growth (PubMed:27879318, PubMed:32912901). In response to nutrients, growth factors or amino acids, mTORC1 is recruited to the lysosome membrane and promotes protein, lipid and nucleotide synthesis by phosphorylating several substrates, such as ribosomal protein S6 kinase (RPS6KB1 and RPS6KB2) and EIF4EBP1 (4E-BP1) (PubMed:27879318). In the same time, it inhibits catabolic pathways by phosphorylating the autophagy initiation components ULK1 and ATG13, as well as transcription factor TFEB, a master regulators of lysosomal biogenesis and autophagy (By similarity). The mTORC1 complex is inhibited in response to starvation and amino acid depletion (By similarity). Within the mTORC1 complex, RPTOR acts both as a molecular adapter, which (1) mediates recruitment of mTORC1 to lysosomal membranes via interaction with small GTPases Rag (RagA/RRAGA, RagB/RRAGB, RagC/RRAGC and/or RagD/RRAGD), and a (2) substrate-specific adapter, which promotes substrate specificity by binding to TOS motif-containing proteins and direct them towards the active site of the MTOR kinase domain for phosphorylation (By similarity). mTORC1 complex regulates many cellular processes, such as odontoblast and osteoclast differentiation or neuronal transmission (PubMed:27879318, PubMed:30984011, PubMed:33495318). mTORC1 complex in excitatory neuronal transmission is required for the prosocial behavior induced by the psychoactive substance lysergic acid diethylamide (LSD) (PubMed:33495318).</text>
</comment>
<comment type="subunit">
    <text evidence="1 6">Part of the mechanistic target of rapamycin complex 1 (mTORC1) which contains MTOR, MLST8 and RPTOR (PubMed:20801936). mTORC1 associates with AKT1S1/PRAS40, which inhibits its activity (By similarity). mTORC1 associates with DEPTOR, which regulates its activity (By similarity). mTORC1 binds to and is inhibited by FKBP12-rapamycin (By similarity). Forms a complex with MTOR under both leucine-rich and -poor conditions (By similarity). Interacts with (via TOS motifs) EIF4EBP1 and RPS6KB1; interaction is independent of its association with MTOR (By similarity). Binds preferentially to poorly or non-phosphorylated forms of EIF4EBP1, and this binding is critical to the ability of MTOR to catalyze phosphorylation (By similarity). Interacts with ULK1 in a nutrient-dependent manner; the interaction is reduced during starvation (By similarity). Interacts with GTP-bound form of RagA/RRAGA or RagB/RRAGB and GDP-bound form of RagC/RRAGC or RagD/RRAGD, promoting recruitment of mTORC1 to the lysosomes (By similarity). Interacts (when phosphorylated by AMPK) with 14-3-3 protein, leading to inhibition of its activity (By similarity). Interacts with SPAG5; SPAG5 competes with MTOR for RPTOR-binding, resulting in decreased mTORC1 formation (By similarity). Interacts with WAC; WAC positively regulates MTOR activity by promoting the assembly of the TTT complex composed of TELO2, TTI1 and TTI2 and the RUVBL complex composed of RUVBL1 and RUVBL2 into the TTT-RUVBL complex which leads to the dimerization of the mTORC1 complex and its subsequent activation (By similarity). Interacts with G3BP1 (By similarity). The complex formed with G3BP1 and SPAG5 is increased by oxidative stress (By similarity). Interacts with HTR6 (By similarity). Interacts with PIH1D1 (By similarity). Interacts with LARP1 (By similarity). Interacts with BRAT1 (By similarity). Interacts with SIK3 (By similarity). Interacts with SLC38A7; this interaction mediates the recruitment of mTORC1 to the lysosome and its subsequent activation (By similarity).</text>
</comment>
<comment type="interaction">
    <interactant intactId="EBI-4567273">
        <id>Q8K4Q0</id>
    </interactant>
    <interactant intactId="EBI-1571628">
        <id>Q9JLN9</id>
        <label>Mtor</label>
    </interactant>
    <organismsDiffer>false</organismsDiffer>
    <experiments>9</experiments>
</comment>
<comment type="interaction">
    <interactant intactId="EBI-4567273">
        <id>Q8K4Q0</id>
    </interactant>
    <interactant intactId="EBI-6921536">
        <id>Q00899</id>
        <label>Yy1</label>
    </interactant>
    <organismsDiffer>false</organismsDiffer>
    <experiments>3</experiments>
</comment>
<comment type="subcellular location">
    <subcellularLocation>
        <location evidence="1">Cytoplasm</location>
    </subcellularLocation>
    <subcellularLocation>
        <location evidence="1">Lysosome</location>
    </subcellularLocation>
    <subcellularLocation>
        <location evidence="1">Cytoplasmic granule</location>
    </subcellularLocation>
    <text evidence="1">Targeting to lysosomes depends on amino acid availability: recruited to lysosomes via interaction with GTP-bound form of RRAGA (or RRAGB) in complex with the GDP-bound form of RRAGC (or RRAGD), promoting recruitment of mTORC1 to the lysosomes. In arsenite-stressed cells, accumulates in stress granules when associated with SPAG5 and association with lysosomes is drastically decreased.</text>
</comment>
<comment type="alternative products">
    <event type="alternative splicing"/>
    <isoform>
        <id>Q8K4Q0-1</id>
        <name>1</name>
        <sequence type="displayed"/>
    </isoform>
    <isoform>
        <id>Q8K4Q0-2</id>
        <name>2</name>
        <sequence type="described" ref="VSP_010175 VSP_010181 VSP_010182"/>
    </isoform>
    <isoform>
        <id>Q8K4Q0-3</id>
        <name>3</name>
        <sequence type="described" ref="VSP_010177 VSP_010179 VSP_010180"/>
    </isoform>
    <isoform>
        <id>Q8K4Q0-4</id>
        <name>4</name>
        <sequence type="described" ref="VSP_010176 VSP_010183 VSP_010184"/>
    </isoform>
    <isoform>
        <id>Q8K4Q0-5</id>
        <name>5</name>
        <sequence type="described" ref="VSP_010178"/>
    </isoform>
</comment>
<comment type="PTM">
    <text evidence="1 4 5 7 11 17">Insulin-stimulated phosphorylation at Ser-863 by MTOR and MAPK8 regulates mTORC1 activity (PubMed:19346248). Phosphorylated at Ser-863 by NLK in response to stress, disrupting the interaction with small GTPases Rag (RagA/RRAGA, RagB/RRAGB, RagC/RRAGC and/or RagD/RRAGD), thereby preventing lysosome recruitment and activation of the mTORC1 complex (PubMed:26588989). Osmotic stress also induces phosphorylation at Ser-696, Thr-706 and Ser-863 by MAPK8 (By similarity). Ser-863 phosphorylation is required for phosphorylation at Ser-855 and Ser-859 (By similarity). In response to nutrient limitation, phosphorylated at Ser-722 and Ser-792 by AMPK; phosphorylation promotes interaction with 14-3-3 proteins, leading to negative regulation of the mTORC1 complex (PubMed:18439900, PubMed:32912901). Phosphorylation at Ser-722 and Ser-792 by AMPK in response to glucose starvation inhibits O-GlcNAcylation by OGT and subsequent activation of mTORC1 (By similarity). In response to growth factors, phosphorylated at Ser-719, Ser-721 and Ser-722 by RPS6KA1, which stimulates mTORC1 activity (By similarity). Phosphorylation at Ser-791 by PKA downstream of cAMP inhibits the mTORC1 complex (Probable) (PubMed:31112131). Phosphorylated at Ser-877 by TBK1, leading to negative regulation of the mTORC1 complex (By similarity).</text>
</comment>
<comment type="PTM">
    <text evidence="1">O-GlcNAcylated by OGT upon glucose sufficiency, promoting interaction with small GTPases Rag (RagA/RRAGA, RagB/RRAGB, RagC/RRAGC and/or RagD/RRAGD) and subsequent recruitment of mTORC1 to lysosomal membranes, leading to activation of the mTORC1 complex (By similarity). Phosphorylation at Ser-722 and Ser-792 by AMPK in response to glucose starvation inhibits O-GlcNAcylation (By similarity).</text>
</comment>
<comment type="PTM">
    <text evidence="1 9">Acetylation at Lys-1097 by EP300/p300 in response to leucine metabolite acetyl-coA promotes its activity, leading to activation of the mTORC1 complex (By similarity). Acetylation is decreased in response to fasting (PubMed:30197302). Phosphorylated at Ser-877 by TBK1, leading to negative regulation of the mTORC1 complex (By similarity).</text>
</comment>
<comment type="PTM">
    <text evidence="1">Ubiquitinated, leading to its degradation by the proteasome (By similarity). Deubiquitinated by OTUB1 via a non-catalytic mechanism (By similarity). Ubiquitinated by an E3 ubiquitin ligase complex containing VHL (By similarity).</text>
</comment>
<comment type="disruption phenotype">
    <text evidence="3 8 10 12">Early embryonic lethality (PubMed:17141160). Conditional deletion in osteoclasts leads to an increase in bone mass with decreased bone resorption due to impaired osteoclast differentiation (PubMed:27879318). Conditional deletion in odontoblasts leads to a dentinogenesis imperfecta phenotype, characterized by smaller tooth volume, a thinner dentin layer and a larger pulp chamber (PubMed:30984011). Conditional knockout mice in excitatory neurons do not show any prosocial effects of lysergic acid diethylamide (LSD) unlike control mice (PubMed:33495318). Conditional knockout mice in inhibitory neurons show no different LSD-induced prosocial behavior compared to control mice (PubMed:33495318).</text>
</comment>
<comment type="similarity">
    <text evidence="16">Belongs to the WD repeat RAPTOR family.</text>
</comment>
<comment type="sequence caution" evidence="16">
    <conflict type="frameshift">
        <sequence resource="EMBL" id="AK029341"/>
    </conflict>
</comment>